<name>ALDH5_YEAS7</name>
<evidence type="ECO:0000250" key="1"/>
<evidence type="ECO:0000255" key="2"/>
<evidence type="ECO:0000255" key="3">
    <source>
        <dbReference type="PROSITE-ProRule" id="PRU10007"/>
    </source>
</evidence>
<evidence type="ECO:0000255" key="4">
    <source>
        <dbReference type="PROSITE-ProRule" id="PRU10008"/>
    </source>
</evidence>
<evidence type="ECO:0000305" key="5"/>
<proteinExistence type="inferred from homology"/>
<feature type="transit peptide" description="Mitochondrion" evidence="2">
    <location>
        <begin position="1"/>
        <end position="23"/>
    </location>
</feature>
<feature type="chain" id="PRO_0000330043" description="Aldehyde dehydrogenase 5, mitochondrial">
    <location>
        <begin position="24"/>
        <end position="520"/>
    </location>
</feature>
<feature type="active site" description="Proton acceptor" evidence="3 4">
    <location>
        <position position="288"/>
    </location>
</feature>
<feature type="active site" description="Nucleophile" evidence="3 4">
    <location>
        <position position="322"/>
    </location>
</feature>
<feature type="binding site" evidence="1">
    <location>
        <begin position="266"/>
        <end position="271"/>
    </location>
    <ligand>
        <name>NAD(+)</name>
        <dbReference type="ChEBI" id="CHEBI:57540"/>
    </ligand>
</feature>
<feature type="site" description="Transition state stabilizer" evidence="1">
    <location>
        <position position="190"/>
    </location>
</feature>
<gene>
    <name type="primary">ALD5</name>
    <name type="ORF">SCY_1574</name>
</gene>
<sequence length="520" mass="56693">MLSRTRAAAPNSRIFTRSLLRLYSQAPLRVPITLPNGFTYEQPTGLFINGEFVASKQKKTFDVINPSNEEKITTVYKAMEDDVDEAVAAAKKAFETKWSIVEPEVRAKALFNLADLVEKHQETLAAIESMDNGKSLFCARGDVALVSKYLRSCGGWADKIYGNVIDTGKNHFTYSIKEPLGVCGQIIPWNFPLLMWSWKIGPALATGNTVVLKPAETTPLSALFASQLCQEAGIPAGVVNILPGSGRVVGERLSAHPDVKKIAFTGSTATGRHIMKVAADTVKKVTLELGGKSPNIVFADADLDKAVKNIAFGIFYNSGEVCCAGSRIYIQDTVYEEVLQKLKDYTESLKVGDPFDEEVFQGAQTSDKQLHKILDYVDVAKSEGARLVTGGARHGSKGYFVKPTVFADVKEDMRIVKEEVFGPIVTVSKFSTVDEVIAMANDSQYGLAAGIHTNDINKAVDVSKRVKAGTVWINTYNNFHQNVPFGGFGQSGIGREMGEAALSNYTQTKSVRIAIDKPIR</sequence>
<protein>
    <recommendedName>
        <fullName>Aldehyde dehydrogenase 5, mitochondrial</fullName>
        <ecNumber>1.2.1.5</ecNumber>
    </recommendedName>
</protein>
<dbReference type="EC" id="1.2.1.5"/>
<dbReference type="EMBL" id="AAFW02000048">
    <property type="protein sequence ID" value="EDN63047.1"/>
    <property type="molecule type" value="Genomic_DNA"/>
</dbReference>
<dbReference type="SMR" id="A6ZR27"/>
<dbReference type="HOGENOM" id="CLU_005391_0_1_1"/>
<dbReference type="UniPathway" id="UPA00780">
    <property type="reaction ID" value="UER00768"/>
</dbReference>
<dbReference type="Proteomes" id="UP000007060">
    <property type="component" value="Unassembled WGS sequence"/>
</dbReference>
<dbReference type="GO" id="GO:0005759">
    <property type="term" value="C:mitochondrial matrix"/>
    <property type="evidence" value="ECO:0007669"/>
    <property type="project" value="UniProtKB-SubCell"/>
</dbReference>
<dbReference type="GO" id="GO:0004029">
    <property type="term" value="F:aldehyde dehydrogenase (NAD+) activity"/>
    <property type="evidence" value="ECO:0007669"/>
    <property type="project" value="RHEA"/>
</dbReference>
<dbReference type="GO" id="GO:0033721">
    <property type="term" value="F:aldehyde dehydrogenase (NADP+) activity"/>
    <property type="evidence" value="ECO:0007669"/>
    <property type="project" value="RHEA"/>
</dbReference>
<dbReference type="GO" id="GO:0006068">
    <property type="term" value="P:ethanol catabolic process"/>
    <property type="evidence" value="ECO:0007669"/>
    <property type="project" value="UniProtKB-UniPathway"/>
</dbReference>
<dbReference type="CDD" id="cd07091">
    <property type="entry name" value="ALDH_F1-2_Ald2-like"/>
    <property type="match status" value="1"/>
</dbReference>
<dbReference type="FunFam" id="3.40.605.10:FF:000011">
    <property type="entry name" value="ALD5p Mitochondrial aldehyde dehydrogenase"/>
    <property type="match status" value="1"/>
</dbReference>
<dbReference type="FunFam" id="3.40.605.10:FF:000026">
    <property type="entry name" value="Aldehyde dehydrogenase, putative"/>
    <property type="match status" value="1"/>
</dbReference>
<dbReference type="FunFam" id="3.40.309.10:FF:000001">
    <property type="entry name" value="Mitochondrial aldehyde dehydrogenase 2"/>
    <property type="match status" value="1"/>
</dbReference>
<dbReference type="Gene3D" id="3.40.605.10">
    <property type="entry name" value="Aldehyde Dehydrogenase, Chain A, domain 1"/>
    <property type="match status" value="1"/>
</dbReference>
<dbReference type="Gene3D" id="3.40.309.10">
    <property type="entry name" value="Aldehyde Dehydrogenase, Chain A, domain 2"/>
    <property type="match status" value="1"/>
</dbReference>
<dbReference type="InterPro" id="IPR016161">
    <property type="entry name" value="Ald_DH/histidinol_DH"/>
</dbReference>
<dbReference type="InterPro" id="IPR016163">
    <property type="entry name" value="Ald_DH_C"/>
</dbReference>
<dbReference type="InterPro" id="IPR016160">
    <property type="entry name" value="Ald_DH_CS_CYS"/>
</dbReference>
<dbReference type="InterPro" id="IPR029510">
    <property type="entry name" value="Ald_DH_CS_GLU"/>
</dbReference>
<dbReference type="InterPro" id="IPR016162">
    <property type="entry name" value="Ald_DH_N"/>
</dbReference>
<dbReference type="InterPro" id="IPR015590">
    <property type="entry name" value="Aldehyde_DH_dom"/>
</dbReference>
<dbReference type="PANTHER" id="PTHR11699">
    <property type="entry name" value="ALDEHYDE DEHYDROGENASE-RELATED"/>
    <property type="match status" value="1"/>
</dbReference>
<dbReference type="Pfam" id="PF00171">
    <property type="entry name" value="Aldedh"/>
    <property type="match status" value="1"/>
</dbReference>
<dbReference type="SUPFAM" id="SSF53720">
    <property type="entry name" value="ALDH-like"/>
    <property type="match status" value="1"/>
</dbReference>
<dbReference type="PROSITE" id="PS00070">
    <property type="entry name" value="ALDEHYDE_DEHYDR_CYS"/>
    <property type="match status" value="1"/>
</dbReference>
<dbReference type="PROSITE" id="PS00687">
    <property type="entry name" value="ALDEHYDE_DEHYDR_GLU"/>
    <property type="match status" value="1"/>
</dbReference>
<keyword id="KW-0496">Mitochondrion</keyword>
<keyword id="KW-0520">NAD</keyword>
<keyword id="KW-0521">NADP</keyword>
<keyword id="KW-0560">Oxidoreductase</keyword>
<keyword id="KW-0809">Transit peptide</keyword>
<organism>
    <name type="scientific">Saccharomyces cerevisiae (strain YJM789)</name>
    <name type="common">Baker's yeast</name>
    <dbReference type="NCBI Taxonomy" id="307796"/>
    <lineage>
        <taxon>Eukaryota</taxon>
        <taxon>Fungi</taxon>
        <taxon>Dikarya</taxon>
        <taxon>Ascomycota</taxon>
        <taxon>Saccharomycotina</taxon>
        <taxon>Saccharomycetes</taxon>
        <taxon>Saccharomycetales</taxon>
        <taxon>Saccharomycetaceae</taxon>
        <taxon>Saccharomyces</taxon>
    </lineage>
</organism>
<accession>A6ZR27</accession>
<reference key="1">
    <citation type="journal article" date="2007" name="Proc. Natl. Acad. Sci. U.S.A.">
        <title>Genome sequencing and comparative analysis of Saccharomyces cerevisiae strain YJM789.</title>
        <authorList>
            <person name="Wei W."/>
            <person name="McCusker J.H."/>
            <person name="Hyman R.W."/>
            <person name="Jones T."/>
            <person name="Ning Y."/>
            <person name="Cao Z."/>
            <person name="Gu Z."/>
            <person name="Bruno D."/>
            <person name="Miranda M."/>
            <person name="Nguyen M."/>
            <person name="Wilhelmy J."/>
            <person name="Komp C."/>
            <person name="Tamse R."/>
            <person name="Wang X."/>
            <person name="Jia P."/>
            <person name="Luedi P."/>
            <person name="Oefner P.J."/>
            <person name="David L."/>
            <person name="Dietrich F.S."/>
            <person name="Li Y."/>
            <person name="Davis R.W."/>
            <person name="Steinmetz L.M."/>
        </authorList>
    </citation>
    <scope>NUCLEOTIDE SEQUENCE [LARGE SCALE GENOMIC DNA]</scope>
    <source>
        <strain>YJM789</strain>
    </source>
</reference>
<comment type="function">
    <text evidence="1">Minor mitochondrial aldehyde dehydrogenase isoform. Plays a role in regulation or biosynthesis of electron transport chain components. Involved in the biosynthesis of acetate during anaerobic growth on glucose (By similarity).</text>
</comment>
<comment type="catalytic activity">
    <reaction>
        <text>an aldehyde + NADP(+) + H2O = a carboxylate + NADPH + 2 H(+)</text>
        <dbReference type="Rhea" id="RHEA:11888"/>
        <dbReference type="ChEBI" id="CHEBI:15377"/>
        <dbReference type="ChEBI" id="CHEBI:15378"/>
        <dbReference type="ChEBI" id="CHEBI:17478"/>
        <dbReference type="ChEBI" id="CHEBI:29067"/>
        <dbReference type="ChEBI" id="CHEBI:57783"/>
        <dbReference type="ChEBI" id="CHEBI:58349"/>
        <dbReference type="EC" id="1.2.1.5"/>
    </reaction>
</comment>
<comment type="catalytic activity">
    <reaction>
        <text>an aldehyde + NAD(+) + H2O = a carboxylate + NADH + 2 H(+)</text>
        <dbReference type="Rhea" id="RHEA:16185"/>
        <dbReference type="ChEBI" id="CHEBI:15377"/>
        <dbReference type="ChEBI" id="CHEBI:15378"/>
        <dbReference type="ChEBI" id="CHEBI:17478"/>
        <dbReference type="ChEBI" id="CHEBI:29067"/>
        <dbReference type="ChEBI" id="CHEBI:57540"/>
        <dbReference type="ChEBI" id="CHEBI:57945"/>
        <dbReference type="EC" id="1.2.1.5"/>
    </reaction>
</comment>
<comment type="activity regulation">
    <text evidence="1">Induced by potassium ions.</text>
</comment>
<comment type="pathway">
    <text>Alcohol metabolism; ethanol degradation; acetate from ethanol: step 2/2.</text>
</comment>
<comment type="subcellular location">
    <subcellularLocation>
        <location evidence="1">Mitochondrion matrix</location>
    </subcellularLocation>
</comment>
<comment type="similarity">
    <text evidence="5">Belongs to the aldehyde dehydrogenase family.</text>
</comment>